<sequence>MKKNVQIKGTKDGISIFLSDKASISELQQELTQLLADQKQNPYSGEKLEVQVQIGNRLFSEEEELEISTIIHENSQMEISAFYSNVMSKDEAKKWKENDQIFSMATIIRSGQVVQVPGDFLLIGDVNPGGQIRSNGNVFVLGNIKGIIHAGFEGNENAVVAGKFLYPSQVRIADKVYGFDSEDYKEVTETDLFSAFVNDAGEIVIDGIHKIRKIRPEISNFQGGR</sequence>
<feature type="chain" id="PRO_0000189042" description="Probable septum site-determining protein MinC">
    <location>
        <begin position="1"/>
        <end position="225"/>
    </location>
</feature>
<dbReference type="EMBL" id="AL591979">
    <property type="protein sequence ID" value="CAC99623.1"/>
    <property type="molecule type" value="Genomic_DNA"/>
</dbReference>
<dbReference type="PIR" id="AI1267">
    <property type="entry name" value="AI1267"/>
</dbReference>
<dbReference type="RefSeq" id="NP_465070.1">
    <property type="nucleotide sequence ID" value="NC_003210.1"/>
</dbReference>
<dbReference type="RefSeq" id="WP_003723227.1">
    <property type="nucleotide sequence ID" value="NZ_CP149495.1"/>
</dbReference>
<dbReference type="SMR" id="Q8Y6Y6"/>
<dbReference type="STRING" id="169963.gene:17594202"/>
<dbReference type="PaxDb" id="169963-lmo1545"/>
<dbReference type="EnsemblBacteria" id="CAC99623">
    <property type="protein sequence ID" value="CAC99623"/>
    <property type="gene ID" value="CAC99623"/>
</dbReference>
<dbReference type="GeneID" id="987769"/>
<dbReference type="KEGG" id="lmo:lmo1545"/>
<dbReference type="PATRIC" id="fig|169963.11.peg.1586"/>
<dbReference type="eggNOG" id="COG0850">
    <property type="taxonomic scope" value="Bacteria"/>
</dbReference>
<dbReference type="HOGENOM" id="CLU_048711_1_1_9"/>
<dbReference type="OrthoDB" id="9790810at2"/>
<dbReference type="PhylomeDB" id="Q8Y6Y6"/>
<dbReference type="BioCyc" id="LMON169963:LMO1545-MONOMER"/>
<dbReference type="Proteomes" id="UP000000817">
    <property type="component" value="Chromosome"/>
</dbReference>
<dbReference type="GO" id="GO:0000902">
    <property type="term" value="P:cell morphogenesis"/>
    <property type="evidence" value="ECO:0007669"/>
    <property type="project" value="InterPro"/>
</dbReference>
<dbReference type="GO" id="GO:0000917">
    <property type="term" value="P:division septum assembly"/>
    <property type="evidence" value="ECO:0007669"/>
    <property type="project" value="UniProtKB-KW"/>
</dbReference>
<dbReference type="GO" id="GO:1901891">
    <property type="term" value="P:regulation of cell septum assembly"/>
    <property type="evidence" value="ECO:0007669"/>
    <property type="project" value="InterPro"/>
</dbReference>
<dbReference type="FunFam" id="2.160.20.70:FF:000013">
    <property type="entry name" value="Probable septum site-determining protein MinC"/>
    <property type="match status" value="1"/>
</dbReference>
<dbReference type="Gene3D" id="2.160.20.70">
    <property type="match status" value="1"/>
</dbReference>
<dbReference type="Gene3D" id="3.30.160.540">
    <property type="match status" value="1"/>
</dbReference>
<dbReference type="HAMAP" id="MF_00267">
    <property type="entry name" value="MinC"/>
    <property type="match status" value="1"/>
</dbReference>
<dbReference type="InterPro" id="IPR016098">
    <property type="entry name" value="CAP/MinC_C"/>
</dbReference>
<dbReference type="InterPro" id="IPR013033">
    <property type="entry name" value="MinC"/>
</dbReference>
<dbReference type="InterPro" id="IPR036145">
    <property type="entry name" value="MinC_C_sf"/>
</dbReference>
<dbReference type="InterPro" id="IPR055219">
    <property type="entry name" value="MinC_N_1"/>
</dbReference>
<dbReference type="InterPro" id="IPR005526">
    <property type="entry name" value="Septum_form_inhib_MinC_C"/>
</dbReference>
<dbReference type="NCBIfam" id="NF001772">
    <property type="entry name" value="PRK00513.1-3"/>
    <property type="match status" value="1"/>
</dbReference>
<dbReference type="PANTHER" id="PTHR34108">
    <property type="entry name" value="SEPTUM SITE-DETERMINING PROTEIN MINC"/>
    <property type="match status" value="1"/>
</dbReference>
<dbReference type="PANTHER" id="PTHR34108:SF1">
    <property type="entry name" value="SEPTUM SITE-DETERMINING PROTEIN MINC"/>
    <property type="match status" value="1"/>
</dbReference>
<dbReference type="Pfam" id="PF03775">
    <property type="entry name" value="MinC_C"/>
    <property type="match status" value="1"/>
</dbReference>
<dbReference type="Pfam" id="PF22642">
    <property type="entry name" value="MinC_N_1"/>
    <property type="match status" value="1"/>
</dbReference>
<dbReference type="SUPFAM" id="SSF63848">
    <property type="entry name" value="Cell-division inhibitor MinC, C-terminal domain"/>
    <property type="match status" value="1"/>
</dbReference>
<name>MINC_LISMO</name>
<reference key="1">
    <citation type="journal article" date="2001" name="Science">
        <title>Comparative genomics of Listeria species.</title>
        <authorList>
            <person name="Glaser P."/>
            <person name="Frangeul L."/>
            <person name="Buchrieser C."/>
            <person name="Rusniok C."/>
            <person name="Amend A."/>
            <person name="Baquero F."/>
            <person name="Berche P."/>
            <person name="Bloecker H."/>
            <person name="Brandt P."/>
            <person name="Chakraborty T."/>
            <person name="Charbit A."/>
            <person name="Chetouani F."/>
            <person name="Couve E."/>
            <person name="de Daruvar A."/>
            <person name="Dehoux P."/>
            <person name="Domann E."/>
            <person name="Dominguez-Bernal G."/>
            <person name="Duchaud E."/>
            <person name="Durant L."/>
            <person name="Dussurget O."/>
            <person name="Entian K.-D."/>
            <person name="Fsihi H."/>
            <person name="Garcia-del Portillo F."/>
            <person name="Garrido P."/>
            <person name="Gautier L."/>
            <person name="Goebel W."/>
            <person name="Gomez-Lopez N."/>
            <person name="Hain T."/>
            <person name="Hauf J."/>
            <person name="Jackson D."/>
            <person name="Jones L.-M."/>
            <person name="Kaerst U."/>
            <person name="Kreft J."/>
            <person name="Kuhn M."/>
            <person name="Kunst F."/>
            <person name="Kurapkat G."/>
            <person name="Madueno E."/>
            <person name="Maitournam A."/>
            <person name="Mata Vicente J."/>
            <person name="Ng E."/>
            <person name="Nedjari H."/>
            <person name="Nordsiek G."/>
            <person name="Novella S."/>
            <person name="de Pablos B."/>
            <person name="Perez-Diaz J.-C."/>
            <person name="Purcell R."/>
            <person name="Remmel B."/>
            <person name="Rose M."/>
            <person name="Schlueter T."/>
            <person name="Simoes N."/>
            <person name="Tierrez A."/>
            <person name="Vazquez-Boland J.-A."/>
            <person name="Voss H."/>
            <person name="Wehland J."/>
            <person name="Cossart P."/>
        </authorList>
    </citation>
    <scope>NUCLEOTIDE SEQUENCE [LARGE SCALE GENOMIC DNA]</scope>
    <source>
        <strain>ATCC BAA-679 / EGD-e</strain>
    </source>
</reference>
<evidence type="ECO:0000250" key="1"/>
<evidence type="ECO:0000305" key="2"/>
<gene>
    <name type="primary">minC</name>
    <name type="ordered locus">lmo1545</name>
</gene>
<organism>
    <name type="scientific">Listeria monocytogenes serovar 1/2a (strain ATCC BAA-679 / EGD-e)</name>
    <dbReference type="NCBI Taxonomy" id="169963"/>
    <lineage>
        <taxon>Bacteria</taxon>
        <taxon>Bacillati</taxon>
        <taxon>Bacillota</taxon>
        <taxon>Bacilli</taxon>
        <taxon>Bacillales</taxon>
        <taxon>Listeriaceae</taxon>
        <taxon>Listeria</taxon>
    </lineage>
</organism>
<accession>Q8Y6Y6</accession>
<keyword id="KW-0131">Cell cycle</keyword>
<keyword id="KW-0132">Cell division</keyword>
<keyword id="KW-1185">Reference proteome</keyword>
<keyword id="KW-0717">Septation</keyword>
<comment type="function">
    <text evidence="1">Cell division inhibitor that blocks the formation of polar Z ring septums. Rapidly oscillates between the poles of the cell to destabilize FtsZ filaments that have formed before they mature into polar Z rings. Prevents FtsZ polymerization (By similarity).</text>
</comment>
<comment type="subunit">
    <text evidence="1">Interacts with MinD and FtsZ.</text>
</comment>
<comment type="similarity">
    <text evidence="2">Belongs to the MinC family.</text>
</comment>
<proteinExistence type="inferred from homology"/>
<protein>
    <recommendedName>
        <fullName>Probable septum site-determining protein MinC</fullName>
    </recommendedName>
</protein>